<organism>
    <name type="scientific">Neisseria meningitidis serogroup A / serotype 4A (strain DSM 15465 / Z2491)</name>
    <dbReference type="NCBI Taxonomy" id="122587"/>
    <lineage>
        <taxon>Bacteria</taxon>
        <taxon>Pseudomonadati</taxon>
        <taxon>Pseudomonadota</taxon>
        <taxon>Betaproteobacteria</taxon>
        <taxon>Neisseriales</taxon>
        <taxon>Neisseriaceae</taxon>
        <taxon>Neisseria</taxon>
    </lineage>
</organism>
<keyword id="KW-0030">Aminoacyl-tRNA synthetase</keyword>
<keyword id="KW-0067">ATP-binding</keyword>
<keyword id="KW-0963">Cytoplasm</keyword>
<keyword id="KW-0436">Ligase</keyword>
<keyword id="KW-0547">Nucleotide-binding</keyword>
<keyword id="KW-0648">Protein biosynthesis</keyword>
<keyword id="KW-0694">RNA-binding</keyword>
<accession>Q9JVY6</accession>
<accession>A1IQ60</accession>
<reference key="1">
    <citation type="journal article" date="2000" name="Nature">
        <title>Complete DNA sequence of a serogroup A strain of Neisseria meningitidis Z2491.</title>
        <authorList>
            <person name="Parkhill J."/>
            <person name="Achtman M."/>
            <person name="James K.D."/>
            <person name="Bentley S.D."/>
            <person name="Churcher C.M."/>
            <person name="Klee S.R."/>
            <person name="Morelli G."/>
            <person name="Basham D."/>
            <person name="Brown D."/>
            <person name="Chillingworth T."/>
            <person name="Davies R.M."/>
            <person name="Davis P."/>
            <person name="Devlin K."/>
            <person name="Feltwell T."/>
            <person name="Hamlin N."/>
            <person name="Holroyd S."/>
            <person name="Jagels K."/>
            <person name="Leather S."/>
            <person name="Moule S."/>
            <person name="Mungall K.L."/>
            <person name="Quail M.A."/>
            <person name="Rajandream M.A."/>
            <person name="Rutherford K.M."/>
            <person name="Simmonds M."/>
            <person name="Skelton J."/>
            <person name="Whitehead S."/>
            <person name="Spratt B.G."/>
            <person name="Barrell B.G."/>
        </authorList>
    </citation>
    <scope>NUCLEOTIDE SEQUENCE [LARGE SCALE GENOMIC DNA]</scope>
    <source>
        <strain>DSM 15465 / Z2491</strain>
    </source>
</reference>
<protein>
    <recommendedName>
        <fullName evidence="1">Tyrosine--tRNA ligase</fullName>
        <ecNumber evidence="1">6.1.1.1</ecNumber>
    </recommendedName>
    <alternativeName>
        <fullName evidence="1">Tyrosyl-tRNA synthetase</fullName>
        <shortName evidence="1">TyrRS</shortName>
    </alternativeName>
</protein>
<comment type="function">
    <text evidence="1">Catalyzes the attachment of tyrosine to tRNA(Tyr) in a two-step reaction: tyrosine is first activated by ATP to form Tyr-AMP and then transferred to the acceptor end of tRNA(Tyr).</text>
</comment>
<comment type="catalytic activity">
    <reaction evidence="1">
        <text>tRNA(Tyr) + L-tyrosine + ATP = L-tyrosyl-tRNA(Tyr) + AMP + diphosphate + H(+)</text>
        <dbReference type="Rhea" id="RHEA:10220"/>
        <dbReference type="Rhea" id="RHEA-COMP:9706"/>
        <dbReference type="Rhea" id="RHEA-COMP:9707"/>
        <dbReference type="ChEBI" id="CHEBI:15378"/>
        <dbReference type="ChEBI" id="CHEBI:30616"/>
        <dbReference type="ChEBI" id="CHEBI:33019"/>
        <dbReference type="ChEBI" id="CHEBI:58315"/>
        <dbReference type="ChEBI" id="CHEBI:78442"/>
        <dbReference type="ChEBI" id="CHEBI:78536"/>
        <dbReference type="ChEBI" id="CHEBI:456215"/>
        <dbReference type="EC" id="6.1.1.1"/>
    </reaction>
</comment>
<comment type="subunit">
    <text evidence="1">Homodimer.</text>
</comment>
<comment type="subcellular location">
    <subcellularLocation>
        <location evidence="1">Cytoplasm</location>
    </subcellularLocation>
</comment>
<comment type="similarity">
    <text evidence="1">Belongs to the class-I aminoacyl-tRNA synthetase family. TyrS type 1 subfamily.</text>
</comment>
<dbReference type="EC" id="6.1.1.1" evidence="1"/>
<dbReference type="EMBL" id="AL157959">
    <property type="protein sequence ID" value="CAM07886.1"/>
    <property type="molecule type" value="Genomic_DNA"/>
</dbReference>
<dbReference type="PIR" id="H81981">
    <property type="entry name" value="H81981"/>
</dbReference>
<dbReference type="RefSeq" id="WP_002249457.1">
    <property type="nucleotide sequence ID" value="NC_003116.1"/>
</dbReference>
<dbReference type="SMR" id="Q9JVY6"/>
<dbReference type="EnsemblBacteria" id="CAM07886">
    <property type="protein sequence ID" value="CAM07886"/>
    <property type="gene ID" value="NMA0620"/>
</dbReference>
<dbReference type="GeneID" id="93386741"/>
<dbReference type="KEGG" id="nma:NMA0620"/>
<dbReference type="HOGENOM" id="CLU_024003_0_3_4"/>
<dbReference type="Proteomes" id="UP000000626">
    <property type="component" value="Chromosome"/>
</dbReference>
<dbReference type="GO" id="GO:0005829">
    <property type="term" value="C:cytosol"/>
    <property type="evidence" value="ECO:0007669"/>
    <property type="project" value="TreeGrafter"/>
</dbReference>
<dbReference type="GO" id="GO:0005524">
    <property type="term" value="F:ATP binding"/>
    <property type="evidence" value="ECO:0007669"/>
    <property type="project" value="UniProtKB-UniRule"/>
</dbReference>
<dbReference type="GO" id="GO:0003723">
    <property type="term" value="F:RNA binding"/>
    <property type="evidence" value="ECO:0007669"/>
    <property type="project" value="UniProtKB-KW"/>
</dbReference>
<dbReference type="GO" id="GO:0004831">
    <property type="term" value="F:tyrosine-tRNA ligase activity"/>
    <property type="evidence" value="ECO:0007669"/>
    <property type="project" value="UniProtKB-UniRule"/>
</dbReference>
<dbReference type="GO" id="GO:0006437">
    <property type="term" value="P:tyrosyl-tRNA aminoacylation"/>
    <property type="evidence" value="ECO:0007669"/>
    <property type="project" value="UniProtKB-UniRule"/>
</dbReference>
<dbReference type="CDD" id="cd00805">
    <property type="entry name" value="TyrRS_core"/>
    <property type="match status" value="1"/>
</dbReference>
<dbReference type="FunFam" id="1.10.240.10:FF:000001">
    <property type="entry name" value="Tyrosine--tRNA ligase"/>
    <property type="match status" value="1"/>
</dbReference>
<dbReference type="FunFam" id="3.10.290.10:FF:000027">
    <property type="entry name" value="Tyrosine--tRNA ligase"/>
    <property type="match status" value="1"/>
</dbReference>
<dbReference type="FunFam" id="3.40.50.620:FF:000008">
    <property type="entry name" value="Tyrosine--tRNA ligase"/>
    <property type="match status" value="1"/>
</dbReference>
<dbReference type="Gene3D" id="3.40.50.620">
    <property type="entry name" value="HUPs"/>
    <property type="match status" value="1"/>
</dbReference>
<dbReference type="Gene3D" id="3.10.290.10">
    <property type="entry name" value="RNA-binding S4 domain"/>
    <property type="match status" value="1"/>
</dbReference>
<dbReference type="Gene3D" id="1.10.240.10">
    <property type="entry name" value="Tyrosyl-Transfer RNA Synthetase"/>
    <property type="match status" value="1"/>
</dbReference>
<dbReference type="HAMAP" id="MF_02006">
    <property type="entry name" value="Tyr_tRNA_synth_type1"/>
    <property type="match status" value="1"/>
</dbReference>
<dbReference type="InterPro" id="IPR001412">
    <property type="entry name" value="aa-tRNA-synth_I_CS"/>
</dbReference>
<dbReference type="InterPro" id="IPR002305">
    <property type="entry name" value="aa-tRNA-synth_Ic"/>
</dbReference>
<dbReference type="InterPro" id="IPR014729">
    <property type="entry name" value="Rossmann-like_a/b/a_fold"/>
</dbReference>
<dbReference type="InterPro" id="IPR036986">
    <property type="entry name" value="S4_RNA-bd_sf"/>
</dbReference>
<dbReference type="InterPro" id="IPR054608">
    <property type="entry name" value="SYY-like_C"/>
</dbReference>
<dbReference type="InterPro" id="IPR002307">
    <property type="entry name" value="Tyr-tRNA-ligase"/>
</dbReference>
<dbReference type="InterPro" id="IPR024088">
    <property type="entry name" value="Tyr-tRNA-ligase_bac-type"/>
</dbReference>
<dbReference type="InterPro" id="IPR024107">
    <property type="entry name" value="Tyr-tRNA-ligase_bac_1"/>
</dbReference>
<dbReference type="NCBIfam" id="TIGR00234">
    <property type="entry name" value="tyrS"/>
    <property type="match status" value="1"/>
</dbReference>
<dbReference type="PANTHER" id="PTHR11766:SF0">
    <property type="entry name" value="TYROSINE--TRNA LIGASE, MITOCHONDRIAL"/>
    <property type="match status" value="1"/>
</dbReference>
<dbReference type="PANTHER" id="PTHR11766">
    <property type="entry name" value="TYROSYL-TRNA SYNTHETASE"/>
    <property type="match status" value="1"/>
</dbReference>
<dbReference type="Pfam" id="PF22421">
    <property type="entry name" value="SYY_C-terminal"/>
    <property type="match status" value="1"/>
</dbReference>
<dbReference type="Pfam" id="PF00579">
    <property type="entry name" value="tRNA-synt_1b"/>
    <property type="match status" value="1"/>
</dbReference>
<dbReference type="PRINTS" id="PR01040">
    <property type="entry name" value="TRNASYNTHTYR"/>
</dbReference>
<dbReference type="SUPFAM" id="SSF55174">
    <property type="entry name" value="Alpha-L RNA-binding motif"/>
    <property type="match status" value="1"/>
</dbReference>
<dbReference type="SUPFAM" id="SSF52374">
    <property type="entry name" value="Nucleotidylyl transferase"/>
    <property type="match status" value="1"/>
</dbReference>
<dbReference type="PROSITE" id="PS00178">
    <property type="entry name" value="AA_TRNA_LIGASE_I"/>
    <property type="match status" value="1"/>
</dbReference>
<dbReference type="PROSITE" id="PS50889">
    <property type="entry name" value="S4"/>
    <property type="match status" value="1"/>
</dbReference>
<feature type="chain" id="PRO_0000234740" description="Tyrosine--tRNA ligase">
    <location>
        <begin position="1"/>
        <end position="431"/>
    </location>
</feature>
<feature type="domain" description="S4 RNA-binding" evidence="1">
    <location>
        <begin position="353"/>
        <end position="422"/>
    </location>
</feature>
<feature type="short sequence motif" description="'HIGH' region">
    <location>
        <begin position="39"/>
        <end position="48"/>
    </location>
</feature>
<feature type="short sequence motif" description="'KMSKS' region">
    <location>
        <begin position="231"/>
        <end position="235"/>
    </location>
</feature>
<feature type="binding site" evidence="1">
    <location>
        <position position="34"/>
    </location>
    <ligand>
        <name>L-tyrosine</name>
        <dbReference type="ChEBI" id="CHEBI:58315"/>
    </ligand>
</feature>
<feature type="binding site" evidence="1">
    <location>
        <position position="171"/>
    </location>
    <ligand>
        <name>L-tyrosine</name>
        <dbReference type="ChEBI" id="CHEBI:58315"/>
    </ligand>
</feature>
<feature type="binding site" evidence="1">
    <location>
        <position position="175"/>
    </location>
    <ligand>
        <name>L-tyrosine</name>
        <dbReference type="ChEBI" id="CHEBI:58315"/>
    </ligand>
</feature>
<feature type="binding site" evidence="1">
    <location>
        <position position="234"/>
    </location>
    <ligand>
        <name>ATP</name>
        <dbReference type="ChEBI" id="CHEBI:30616"/>
    </ligand>
</feature>
<evidence type="ECO:0000255" key="1">
    <source>
        <dbReference type="HAMAP-Rule" id="MF_02006"/>
    </source>
</evidence>
<name>SYY_NEIMA</name>
<sequence>MSVIQDLQSRGLIAQTTDIEALDALLNEQKIALYCGFDPTADSLHIGHLLPVLALRRFQQAGHTPIALVGGATGMIGDPSFKAAERSLNSAETVAGWVESIRNQLTPFLSFEGGNAAIMANNADWFGKMNCLDFLRDIGKHFSVNAMLNKESVKQRIDRDGAGISFTEFAYSLLQGYDFAELNKRHGAVLEIGGSDQWGNITAGIDLTRRLNQKQVFGLTLPLVTKSDGTKFGKTEGGAVWLNAKKTSPYQFYQFWLKVADADVYKFLKYFTFLSIEEIDAIEAKDKASGTKPEAQRILAEEMTRLIHGEAALQAAQRISESLFAEDQSSLTESDFEQLALDGLPAFEVSDGINVVEALVKTGLASSNKEARGFVNSKAVLLNGKPAEANNPNHAAERPDDACLLTDEHKRFGKYTILRRGKRNHALLVWK</sequence>
<proteinExistence type="inferred from homology"/>
<gene>
    <name evidence="1" type="primary">tyrS</name>
    <name type="ordered locus">NMA0620</name>
</gene>